<keyword id="KW-0963">Cytoplasm</keyword>
<keyword id="KW-0342">GTP-binding</keyword>
<keyword id="KW-0547">Nucleotide-binding</keyword>
<keyword id="KW-0648">Protein biosynthesis</keyword>
<accession>B4T4G3</accession>
<proteinExistence type="inferred from homology"/>
<name>RF3_SALNS</name>
<comment type="function">
    <text evidence="1">Increases the formation of ribosomal termination complexes and stimulates activities of RF-1 and RF-2. It binds guanine nucleotides and has strong preference for UGA stop codons. It may interact directly with the ribosome. The stimulation of RF-1 and RF-2 is significantly reduced by GTP and GDP, but not by GMP.</text>
</comment>
<comment type="subcellular location">
    <subcellularLocation>
        <location evidence="1">Cytoplasm</location>
    </subcellularLocation>
</comment>
<comment type="similarity">
    <text evidence="1">Belongs to the TRAFAC class translation factor GTPase superfamily. Classic translation factor GTPase family. PrfC subfamily.</text>
</comment>
<reference key="1">
    <citation type="journal article" date="2011" name="J. Bacteriol.">
        <title>Comparative genomics of 28 Salmonella enterica isolates: evidence for CRISPR-mediated adaptive sublineage evolution.</title>
        <authorList>
            <person name="Fricke W.F."/>
            <person name="Mammel M.K."/>
            <person name="McDermott P.F."/>
            <person name="Tartera C."/>
            <person name="White D.G."/>
            <person name="Leclerc J.E."/>
            <person name="Ravel J."/>
            <person name="Cebula T.A."/>
        </authorList>
    </citation>
    <scope>NUCLEOTIDE SEQUENCE [LARGE SCALE GENOMIC DNA]</scope>
    <source>
        <strain>SL254</strain>
    </source>
</reference>
<evidence type="ECO:0000255" key="1">
    <source>
        <dbReference type="HAMAP-Rule" id="MF_00072"/>
    </source>
</evidence>
<gene>
    <name evidence="1" type="primary">prfC</name>
    <name type="ordered locus">SNSL254_A4916</name>
</gene>
<sequence>MTLSPYLQEVAKRRTFAIISHPDAGKTTITEKVLLFGQAIQTAGTVKGRGSSQHAKSDWMEMEKQRGISITTSVMQFPYHDCLVNLLDTPGHEDFSEDTYRTLTAVDCCLMVIDAAKGVEDRTRKLMEVTRLRDTPILTFMNKLDRDIRDPMELLDEVENELKIGCAPITWPIGCGKLFKGVYHLYKDETYLYQTGKGHTIQEVRIVKGLNNPDLDAAVGEDLAQQLRDELELVQGASNEFDEELFLAGEITPVFFGTALGNFGVDHMLDGLVAWAPAPMPRQTDTRTVEASEEKFTGFVFKIQANMDPKHRDRVAFMRVVSGKYEKGMKLRQVRTGKDVVISDALTFMAGDRSHVEEAYPGDILGLHNHGTIQIGDTFTQGEMMKFTGIPNFAPELFRRIRLKDPLKQKQLLKGLVQLSEEGAVQVFRPISNNDLIVGAVGVLQFDVVVARLKSEYNVEAIYESVNVATARWVESADAKKFEEFKRKNETQLALDGGDNLTYIAPTMVNLNLTQERYPDVQFRKTREH</sequence>
<dbReference type="EMBL" id="CP001113">
    <property type="protein sequence ID" value="ACF61299.1"/>
    <property type="molecule type" value="Genomic_DNA"/>
</dbReference>
<dbReference type="RefSeq" id="WP_000175965.1">
    <property type="nucleotide sequence ID" value="NZ_CCMR01000003.1"/>
</dbReference>
<dbReference type="SMR" id="B4T4G3"/>
<dbReference type="KEGG" id="see:SNSL254_A4916"/>
<dbReference type="HOGENOM" id="CLU_002794_2_1_6"/>
<dbReference type="Proteomes" id="UP000008824">
    <property type="component" value="Chromosome"/>
</dbReference>
<dbReference type="GO" id="GO:0005829">
    <property type="term" value="C:cytosol"/>
    <property type="evidence" value="ECO:0007669"/>
    <property type="project" value="TreeGrafter"/>
</dbReference>
<dbReference type="GO" id="GO:0005525">
    <property type="term" value="F:GTP binding"/>
    <property type="evidence" value="ECO:0007669"/>
    <property type="project" value="UniProtKB-UniRule"/>
</dbReference>
<dbReference type="GO" id="GO:0003924">
    <property type="term" value="F:GTPase activity"/>
    <property type="evidence" value="ECO:0007669"/>
    <property type="project" value="InterPro"/>
</dbReference>
<dbReference type="GO" id="GO:0097216">
    <property type="term" value="F:guanosine tetraphosphate binding"/>
    <property type="evidence" value="ECO:0007669"/>
    <property type="project" value="UniProtKB-ARBA"/>
</dbReference>
<dbReference type="GO" id="GO:0016150">
    <property type="term" value="F:translation release factor activity, codon nonspecific"/>
    <property type="evidence" value="ECO:0007669"/>
    <property type="project" value="TreeGrafter"/>
</dbReference>
<dbReference type="GO" id="GO:0016149">
    <property type="term" value="F:translation release factor activity, codon specific"/>
    <property type="evidence" value="ECO:0007669"/>
    <property type="project" value="UniProtKB-UniRule"/>
</dbReference>
<dbReference type="GO" id="GO:0006449">
    <property type="term" value="P:regulation of translational termination"/>
    <property type="evidence" value="ECO:0007669"/>
    <property type="project" value="UniProtKB-UniRule"/>
</dbReference>
<dbReference type="CDD" id="cd04169">
    <property type="entry name" value="RF3"/>
    <property type="match status" value="1"/>
</dbReference>
<dbReference type="CDD" id="cd03689">
    <property type="entry name" value="RF3_II"/>
    <property type="match status" value="1"/>
</dbReference>
<dbReference type="CDD" id="cd16259">
    <property type="entry name" value="RF3_III"/>
    <property type="match status" value="1"/>
</dbReference>
<dbReference type="FunFam" id="2.40.30.10:FF:000040">
    <property type="entry name" value="Peptide chain release factor 3"/>
    <property type="match status" value="1"/>
</dbReference>
<dbReference type="FunFam" id="3.30.70.3280:FF:000001">
    <property type="entry name" value="Peptide chain release factor 3"/>
    <property type="match status" value="1"/>
</dbReference>
<dbReference type="FunFam" id="3.40.50.300:FF:000184">
    <property type="entry name" value="Peptide chain release factor 3"/>
    <property type="match status" value="1"/>
</dbReference>
<dbReference type="FunFam" id="3.40.50.300:FF:000253">
    <property type="entry name" value="Peptide chain release factor 3"/>
    <property type="match status" value="1"/>
</dbReference>
<dbReference type="Gene3D" id="3.40.50.300">
    <property type="entry name" value="P-loop containing nucleotide triphosphate hydrolases"/>
    <property type="match status" value="3"/>
</dbReference>
<dbReference type="Gene3D" id="3.30.70.3280">
    <property type="entry name" value="Peptide chain release factor 3, domain III"/>
    <property type="match status" value="1"/>
</dbReference>
<dbReference type="HAMAP" id="MF_00072">
    <property type="entry name" value="Rel_fac_3"/>
    <property type="match status" value="1"/>
</dbReference>
<dbReference type="InterPro" id="IPR053905">
    <property type="entry name" value="EF-G-like_DII"/>
</dbReference>
<dbReference type="InterPro" id="IPR035647">
    <property type="entry name" value="EFG_III/V"/>
</dbReference>
<dbReference type="InterPro" id="IPR031157">
    <property type="entry name" value="G_TR_CS"/>
</dbReference>
<dbReference type="InterPro" id="IPR027417">
    <property type="entry name" value="P-loop_NTPase"/>
</dbReference>
<dbReference type="InterPro" id="IPR004548">
    <property type="entry name" value="PrfC"/>
</dbReference>
<dbReference type="InterPro" id="IPR032090">
    <property type="entry name" value="RF3_C"/>
</dbReference>
<dbReference type="InterPro" id="IPR038467">
    <property type="entry name" value="RF3_dom_3_sf"/>
</dbReference>
<dbReference type="InterPro" id="IPR041732">
    <property type="entry name" value="RF3_GTP-bd"/>
</dbReference>
<dbReference type="InterPro" id="IPR005225">
    <property type="entry name" value="Small_GTP-bd"/>
</dbReference>
<dbReference type="InterPro" id="IPR000795">
    <property type="entry name" value="T_Tr_GTP-bd_dom"/>
</dbReference>
<dbReference type="InterPro" id="IPR009000">
    <property type="entry name" value="Transl_B-barrel_sf"/>
</dbReference>
<dbReference type="NCBIfam" id="TIGR00503">
    <property type="entry name" value="prfC"/>
    <property type="match status" value="1"/>
</dbReference>
<dbReference type="NCBIfam" id="NF001964">
    <property type="entry name" value="PRK00741.1"/>
    <property type="match status" value="1"/>
</dbReference>
<dbReference type="NCBIfam" id="TIGR00231">
    <property type="entry name" value="small_GTP"/>
    <property type="match status" value="1"/>
</dbReference>
<dbReference type="PANTHER" id="PTHR43556">
    <property type="entry name" value="PEPTIDE CHAIN RELEASE FACTOR RF3"/>
    <property type="match status" value="1"/>
</dbReference>
<dbReference type="PANTHER" id="PTHR43556:SF2">
    <property type="entry name" value="PEPTIDE CHAIN RELEASE FACTOR RF3"/>
    <property type="match status" value="1"/>
</dbReference>
<dbReference type="Pfam" id="PF22042">
    <property type="entry name" value="EF-G_D2"/>
    <property type="match status" value="1"/>
</dbReference>
<dbReference type="Pfam" id="PF00009">
    <property type="entry name" value="GTP_EFTU"/>
    <property type="match status" value="1"/>
</dbReference>
<dbReference type="Pfam" id="PF16658">
    <property type="entry name" value="RF3_C"/>
    <property type="match status" value="1"/>
</dbReference>
<dbReference type="PRINTS" id="PR00315">
    <property type="entry name" value="ELONGATNFCT"/>
</dbReference>
<dbReference type="SUPFAM" id="SSF54980">
    <property type="entry name" value="EF-G C-terminal domain-like"/>
    <property type="match status" value="1"/>
</dbReference>
<dbReference type="SUPFAM" id="SSF52540">
    <property type="entry name" value="P-loop containing nucleoside triphosphate hydrolases"/>
    <property type="match status" value="1"/>
</dbReference>
<dbReference type="SUPFAM" id="SSF50447">
    <property type="entry name" value="Translation proteins"/>
    <property type="match status" value="1"/>
</dbReference>
<dbReference type="PROSITE" id="PS00301">
    <property type="entry name" value="G_TR_1"/>
    <property type="match status" value="1"/>
</dbReference>
<dbReference type="PROSITE" id="PS51722">
    <property type="entry name" value="G_TR_2"/>
    <property type="match status" value="1"/>
</dbReference>
<protein>
    <recommendedName>
        <fullName evidence="1">Peptide chain release factor 3</fullName>
        <shortName evidence="1">RF-3</shortName>
    </recommendedName>
</protein>
<organism>
    <name type="scientific">Salmonella newport (strain SL254)</name>
    <dbReference type="NCBI Taxonomy" id="423368"/>
    <lineage>
        <taxon>Bacteria</taxon>
        <taxon>Pseudomonadati</taxon>
        <taxon>Pseudomonadota</taxon>
        <taxon>Gammaproteobacteria</taxon>
        <taxon>Enterobacterales</taxon>
        <taxon>Enterobacteriaceae</taxon>
        <taxon>Salmonella</taxon>
    </lineage>
</organism>
<feature type="chain" id="PRO_1000092498" description="Peptide chain release factor 3">
    <location>
        <begin position="1"/>
        <end position="529"/>
    </location>
</feature>
<feature type="domain" description="tr-type G">
    <location>
        <begin position="11"/>
        <end position="280"/>
    </location>
</feature>
<feature type="binding site" evidence="1">
    <location>
        <begin position="20"/>
        <end position="27"/>
    </location>
    <ligand>
        <name>GTP</name>
        <dbReference type="ChEBI" id="CHEBI:37565"/>
    </ligand>
</feature>
<feature type="binding site" evidence="1">
    <location>
        <begin position="88"/>
        <end position="92"/>
    </location>
    <ligand>
        <name>GTP</name>
        <dbReference type="ChEBI" id="CHEBI:37565"/>
    </ligand>
</feature>
<feature type="binding site" evidence="1">
    <location>
        <begin position="142"/>
        <end position="145"/>
    </location>
    <ligand>
        <name>GTP</name>
        <dbReference type="ChEBI" id="CHEBI:37565"/>
    </ligand>
</feature>